<name>INS3B_CONGE</name>
<comment type="function">
    <text evidence="2">This venom insulin, from a fish-hunting cone snail, facilitates prey capture by rapidly inducing hypoglycemic shock. It is one of the smallest known insulin found in nature and lacks the C-terminal segment of the B chain that, in human insulin, mediates engagement of the insulin receptor (INSR) and assembly of the hormone's hexameric storage form. Despite lacking this segment, it both binds and activates human insulin receptor (long isoform (HIR-B)) with only a 10-fold lower potency. In vivo, intraperitoneal injection of this peptide into zebrafish lowers blood glucose with the same potency than human insulin. In addition, when applied to water, this peptide reduces overall locomotor activity of zebrafish larvae, observed as a significant decrease in the percentage of time spent swimming and movement frequency.</text>
</comment>
<comment type="subunit">
    <text evidence="2">Heterodimer of A and B chains; disulfide-linked.</text>
</comment>
<comment type="subcellular location">
    <subcellularLocation>
        <location evidence="2">Secreted</location>
    </subcellularLocation>
</comment>
<comment type="tissue specificity">
    <text evidence="5">Expressed by the venom gland.</text>
</comment>
<comment type="PTM">
    <text evidence="1">It is noteworthy that in this dimer, in contrast to Con-Ins G1, the chain B is amidated and not the chain A.</text>
</comment>
<comment type="miscellaneous">
    <text evidence="5">Venom insulins constitute about 1/25 of the total venom of C.geographus.</text>
</comment>
<comment type="similarity">
    <text>Belongs to the insulin family.</text>
</comment>
<accession>A0A0B5AC86</accession>
<sequence>MTTSFYFLLVALGLLLYVCQSSFGNQHTRNSDTPKHRCGSELADQYVQLCHGKRNDAGKKRGRASPLWQRQGFLSMLKAKRNEAFFLQRDGRGIVEVCCDNPCTVATLMTFCH</sequence>
<organism>
    <name type="scientific">Conus geographus</name>
    <name type="common">Geography cone</name>
    <name type="synonym">Nubecula geographus</name>
    <dbReference type="NCBI Taxonomy" id="6491"/>
    <lineage>
        <taxon>Eukaryota</taxon>
        <taxon>Metazoa</taxon>
        <taxon>Spiralia</taxon>
        <taxon>Lophotrochozoa</taxon>
        <taxon>Mollusca</taxon>
        <taxon>Gastropoda</taxon>
        <taxon>Caenogastropoda</taxon>
        <taxon>Neogastropoda</taxon>
        <taxon>Conoidea</taxon>
        <taxon>Conidae</taxon>
        <taxon>Conus</taxon>
        <taxon>Gastridium</taxon>
    </lineage>
</organism>
<reference key="1">
    <citation type="journal article" date="2015" name="Proc. Natl. Acad. Sci. U.S.A.">
        <title>Specialized insulin is used for chemical warfare by fish-hunting cone snails.</title>
        <authorList>
            <person name="Safavi-Hemami H."/>
            <person name="Gajewiak J."/>
            <person name="Karanth S."/>
            <person name="Robinson S.D."/>
            <person name="Ueberheide B."/>
            <person name="Douglass A.D."/>
            <person name="Schlegel A."/>
            <person name="Imperial J.S."/>
            <person name="Watkins M."/>
            <person name="Bandyopadhyay P.K."/>
            <person name="Yandell M."/>
            <person name="Li Q."/>
            <person name="Purcell A.W."/>
            <person name="Norton R.S."/>
            <person name="Ellgaard L."/>
            <person name="Olivera B.M."/>
        </authorList>
    </citation>
    <scope>NUCLEOTIDE SEQUENCE [MRNA]</scope>
    <source>
        <tissue>Venom gland</tissue>
    </source>
</reference>
<protein>
    <recommendedName>
        <fullName evidence="4">Con-Ins G3b</fullName>
    </recommendedName>
    <alternativeName>
        <fullName evidence="6">Insulin 3b</fullName>
    </alternativeName>
    <component>
        <recommendedName>
            <fullName evidence="4">Con-Ins G3b B chain</fullName>
        </recommendedName>
    </component>
    <component>
        <recommendedName>
            <fullName evidence="4">Con-Ins G3b A chain</fullName>
        </recommendedName>
    </component>
</protein>
<dbReference type="EMBL" id="KP268618">
    <property type="protein sequence ID" value="AJD85822.1"/>
    <property type="molecule type" value="mRNA"/>
</dbReference>
<dbReference type="GO" id="GO:0005576">
    <property type="term" value="C:extracellular region"/>
    <property type="evidence" value="ECO:0007669"/>
    <property type="project" value="UniProtKB-SubCell"/>
</dbReference>
<dbReference type="GO" id="GO:0005179">
    <property type="term" value="F:hormone activity"/>
    <property type="evidence" value="ECO:0007669"/>
    <property type="project" value="UniProtKB-KW"/>
</dbReference>
<dbReference type="GO" id="GO:0090729">
    <property type="term" value="F:toxin activity"/>
    <property type="evidence" value="ECO:0007669"/>
    <property type="project" value="UniProtKB-KW"/>
</dbReference>
<dbReference type="GO" id="GO:0006006">
    <property type="term" value="P:glucose metabolic process"/>
    <property type="evidence" value="ECO:0007669"/>
    <property type="project" value="UniProtKB-KW"/>
</dbReference>
<dbReference type="Gene3D" id="1.10.100.10">
    <property type="entry name" value="Insulin-like"/>
    <property type="match status" value="1"/>
</dbReference>
<dbReference type="InterPro" id="IPR016179">
    <property type="entry name" value="Insulin-like"/>
</dbReference>
<dbReference type="InterPro" id="IPR036438">
    <property type="entry name" value="Insulin-like_sf"/>
</dbReference>
<dbReference type="InterPro" id="IPR022353">
    <property type="entry name" value="Insulin_CS"/>
</dbReference>
<dbReference type="InterPro" id="IPR022352">
    <property type="entry name" value="Insulin_family"/>
</dbReference>
<dbReference type="Pfam" id="PF00049">
    <property type="entry name" value="Insulin"/>
    <property type="match status" value="1"/>
</dbReference>
<dbReference type="PRINTS" id="PR00276">
    <property type="entry name" value="INSULINFAMLY"/>
</dbReference>
<dbReference type="SMART" id="SM00078">
    <property type="entry name" value="IlGF"/>
    <property type="match status" value="1"/>
</dbReference>
<dbReference type="SUPFAM" id="SSF56994">
    <property type="entry name" value="Insulin-like"/>
    <property type="match status" value="1"/>
</dbReference>
<dbReference type="PROSITE" id="PS00262">
    <property type="entry name" value="INSULIN"/>
    <property type="match status" value="1"/>
</dbReference>
<evidence type="ECO:0000250" key="1">
    <source>
        <dbReference type="UniProtKB" id="A0A0B5A8P4"/>
    </source>
</evidence>
<evidence type="ECO:0000250" key="2">
    <source>
        <dbReference type="UniProtKB" id="A0A0B5AC95"/>
    </source>
</evidence>
<evidence type="ECO:0000255" key="3"/>
<evidence type="ECO:0000303" key="4">
    <source>
    </source>
</evidence>
<evidence type="ECO:0000305" key="5">
    <source>
    </source>
</evidence>
<evidence type="ECO:0000312" key="6">
    <source>
        <dbReference type="EMBL" id="AJD85822.1"/>
    </source>
</evidence>
<feature type="signal peptide" evidence="3">
    <location>
        <begin position="1"/>
        <end position="21"/>
    </location>
</feature>
<feature type="propeptide" id="PRO_0000439313" evidence="2">
    <location>
        <begin position="22"/>
        <end position="29"/>
    </location>
</feature>
<feature type="peptide" id="PRO_5002098282" description="Con-Ins G3b B chain" evidence="2">
    <location>
        <begin position="30"/>
        <end position="51"/>
    </location>
</feature>
<feature type="propeptide" id="PRO_0000439314" description="C peptide" evidence="2">
    <location>
        <begin position="52"/>
        <end position="92"/>
    </location>
</feature>
<feature type="peptide" id="PRO_0000439315" description="Con-Ins G3b A chain" evidence="2">
    <location>
        <begin position="93"/>
        <end position="113"/>
    </location>
</feature>
<feature type="modified residue" description="4-hydroxyproline; partial" evidence="2">
    <location>
        <position position="34"/>
    </location>
</feature>
<feature type="modified residue" description="4-carboxyglutamate" evidence="2">
    <location>
        <position position="41"/>
    </location>
</feature>
<feature type="modified residue" description="Histidine amide" evidence="1">
    <location>
        <position position="51"/>
    </location>
</feature>
<feature type="modified residue" description="4-carboxyglutamate" evidence="2">
    <location>
        <position position="96"/>
    </location>
</feature>
<feature type="modified residue" description="4-hydroxyproline; partial" evidence="2">
    <location>
        <position position="102"/>
    </location>
</feature>
<feature type="disulfide bond" description="Interchain (between B and A chains)" evidence="2">
    <location>
        <begin position="38"/>
        <end position="99"/>
    </location>
</feature>
<feature type="disulfide bond" description="Interchain (between B and A chains)" evidence="2">
    <location>
        <begin position="50"/>
        <end position="112"/>
    </location>
</feature>
<feature type="disulfide bond" evidence="2">
    <location>
        <begin position="98"/>
        <end position="103"/>
    </location>
</feature>
<keyword id="KW-0027">Amidation</keyword>
<keyword id="KW-0119">Carbohydrate metabolism</keyword>
<keyword id="KW-0165">Cleavage on pair of basic residues</keyword>
<keyword id="KW-1015">Disulfide bond</keyword>
<keyword id="KW-0301">Gamma-carboxyglutamic acid</keyword>
<keyword id="KW-0313">Glucose metabolism</keyword>
<keyword id="KW-0372">Hormone</keyword>
<keyword id="KW-0379">Hydroxylation</keyword>
<keyword id="KW-0964">Secreted</keyword>
<keyword id="KW-0732">Signal</keyword>
<keyword id="KW-0800">Toxin</keyword>
<proteinExistence type="inferred from homology"/>